<reference key="1">
    <citation type="journal article" date="2002" name="Nucleic Acids Res.">
        <title>Genome sequence of Shigella flexneri 2a: insights into pathogenicity through comparison with genomes of Escherichia coli K12 and O157.</title>
        <authorList>
            <person name="Jin Q."/>
            <person name="Yuan Z."/>
            <person name="Xu J."/>
            <person name="Wang Y."/>
            <person name="Shen Y."/>
            <person name="Lu W."/>
            <person name="Wang J."/>
            <person name="Liu H."/>
            <person name="Yang J."/>
            <person name="Yang F."/>
            <person name="Zhang X."/>
            <person name="Zhang J."/>
            <person name="Yang G."/>
            <person name="Wu H."/>
            <person name="Qu D."/>
            <person name="Dong J."/>
            <person name="Sun L."/>
            <person name="Xue Y."/>
            <person name="Zhao A."/>
            <person name="Gao Y."/>
            <person name="Zhu J."/>
            <person name="Kan B."/>
            <person name="Ding K."/>
            <person name="Chen S."/>
            <person name="Cheng H."/>
            <person name="Yao Z."/>
            <person name="He B."/>
            <person name="Chen R."/>
            <person name="Ma D."/>
            <person name="Qiang B."/>
            <person name="Wen Y."/>
            <person name="Hou Y."/>
            <person name="Yu J."/>
        </authorList>
    </citation>
    <scope>NUCLEOTIDE SEQUENCE [LARGE SCALE GENOMIC DNA]</scope>
    <source>
        <strain>301 / Serotype 2a</strain>
    </source>
</reference>
<reference key="2">
    <citation type="journal article" date="2003" name="Infect. Immun.">
        <title>Complete genome sequence and comparative genomics of Shigella flexneri serotype 2a strain 2457T.</title>
        <authorList>
            <person name="Wei J."/>
            <person name="Goldberg M.B."/>
            <person name="Burland V."/>
            <person name="Venkatesan M.M."/>
            <person name="Deng W."/>
            <person name="Fournier G."/>
            <person name="Mayhew G.F."/>
            <person name="Plunkett G. III"/>
            <person name="Rose D.J."/>
            <person name="Darling A."/>
            <person name="Mau B."/>
            <person name="Perna N.T."/>
            <person name="Payne S.M."/>
            <person name="Runyen-Janecky L.J."/>
            <person name="Zhou S."/>
            <person name="Schwartz D.C."/>
            <person name="Blattner F.R."/>
        </authorList>
    </citation>
    <scope>NUCLEOTIDE SEQUENCE [LARGE SCALE GENOMIC DNA]</scope>
    <source>
        <strain>ATCC 700930 / 2457T / Serotype 2a</strain>
    </source>
</reference>
<feature type="initiator methionine" description="Removed" evidence="1">
    <location>
        <position position="1"/>
    </location>
</feature>
<feature type="chain" id="PRO_0000168029" description="Small ribosomal subunit protein bS20">
    <location>
        <begin position="2"/>
        <end position="87"/>
    </location>
</feature>
<feature type="sequence conflict" description="In Ref. 2; AAP15567." evidence="3" ref="2">
    <original>II</original>
    <variation>HN</variation>
    <location>
        <begin position="20"/>
        <end position="21"/>
    </location>
</feature>
<feature type="sequence conflict" description="In Ref. 2; AAP15567." evidence="3" ref="2">
    <original>P</original>
    <variation>T</variation>
    <location>
        <position position="30"/>
    </location>
</feature>
<feature type="sequence conflict" description="In Ref. 2; AAP15567." evidence="3" ref="2">
    <original>GD</original>
    <variation>VY</variation>
    <location>
        <begin position="35"/>
        <end position="36"/>
    </location>
</feature>
<keyword id="KW-1185">Reference proteome</keyword>
<keyword id="KW-0687">Ribonucleoprotein</keyword>
<keyword id="KW-0689">Ribosomal protein</keyword>
<keyword id="KW-0694">RNA-binding</keyword>
<keyword id="KW-0699">rRNA-binding</keyword>
<proteinExistence type="inferred from homology"/>
<evidence type="ECO:0000250" key="1"/>
<evidence type="ECO:0000255" key="2">
    <source>
        <dbReference type="HAMAP-Rule" id="MF_00500"/>
    </source>
</evidence>
<evidence type="ECO:0000305" key="3"/>
<name>RS20_SHIFL</name>
<sequence>MANIKSAKKRAIQSEKARKIIASRRSMMRPFIKKGDAAIEAGDKAAAQKAFNEMQPIVDRQAAKGLIHKNKAARHKANLTAQINKLA</sequence>
<organism>
    <name type="scientific">Shigella flexneri</name>
    <dbReference type="NCBI Taxonomy" id="623"/>
    <lineage>
        <taxon>Bacteria</taxon>
        <taxon>Pseudomonadati</taxon>
        <taxon>Pseudomonadota</taxon>
        <taxon>Gammaproteobacteria</taxon>
        <taxon>Enterobacterales</taxon>
        <taxon>Enterobacteriaceae</taxon>
        <taxon>Shigella</taxon>
    </lineage>
</organism>
<protein>
    <recommendedName>
        <fullName evidence="2">Small ribosomal subunit protein bS20</fullName>
    </recommendedName>
    <alternativeName>
        <fullName evidence="3">30S ribosomal protein S20</fullName>
    </alternativeName>
</protein>
<gene>
    <name evidence="2" type="primary">rpsT</name>
    <name type="ordered locus">SF0020</name>
    <name type="ordered locus">S0022</name>
</gene>
<comment type="function">
    <text evidence="2">Binds directly to 16S ribosomal RNA.</text>
</comment>
<comment type="similarity">
    <text evidence="2">Belongs to the bacterial ribosomal protein bS20 family.</text>
</comment>
<comment type="sequence caution" evidence="3">
    <conflict type="erroneous initiation">
        <sequence resource="EMBL-CDS" id="AAN41686"/>
    </conflict>
    <text>Truncated N-terminus.</text>
</comment>
<comment type="sequence caution" evidence="3">
    <conflict type="erroneous initiation">
        <sequence resource="EMBL-CDS" id="AAP15567"/>
    </conflict>
    <text>Truncated N-terminus.</text>
</comment>
<dbReference type="EMBL" id="AE005674">
    <property type="protein sequence ID" value="AAN41686.2"/>
    <property type="status" value="ALT_INIT"/>
    <property type="molecule type" value="Genomic_DNA"/>
</dbReference>
<dbReference type="EMBL" id="AE014073">
    <property type="protein sequence ID" value="AAP15567.1"/>
    <property type="status" value="ALT_INIT"/>
    <property type="molecule type" value="Genomic_DNA"/>
</dbReference>
<dbReference type="RefSeq" id="WP_001274022.1">
    <property type="nucleotide sequence ID" value="NZ_CP123365.1"/>
</dbReference>
<dbReference type="SMR" id="Q83SR1"/>
<dbReference type="STRING" id="198214.SF0020"/>
<dbReference type="PaxDb" id="198214-SF0020"/>
<dbReference type="KEGG" id="sfx:S0022"/>
<dbReference type="HOGENOM" id="CLU_160655_4_2_6"/>
<dbReference type="Proteomes" id="UP000001006">
    <property type="component" value="Chromosome"/>
</dbReference>
<dbReference type="Proteomes" id="UP000002673">
    <property type="component" value="Chromosome"/>
</dbReference>
<dbReference type="GO" id="GO:0005829">
    <property type="term" value="C:cytosol"/>
    <property type="evidence" value="ECO:0007669"/>
    <property type="project" value="TreeGrafter"/>
</dbReference>
<dbReference type="GO" id="GO:0015935">
    <property type="term" value="C:small ribosomal subunit"/>
    <property type="evidence" value="ECO:0007669"/>
    <property type="project" value="TreeGrafter"/>
</dbReference>
<dbReference type="GO" id="GO:0070181">
    <property type="term" value="F:small ribosomal subunit rRNA binding"/>
    <property type="evidence" value="ECO:0007669"/>
    <property type="project" value="TreeGrafter"/>
</dbReference>
<dbReference type="GO" id="GO:0003735">
    <property type="term" value="F:structural constituent of ribosome"/>
    <property type="evidence" value="ECO:0007669"/>
    <property type="project" value="InterPro"/>
</dbReference>
<dbReference type="GO" id="GO:0006412">
    <property type="term" value="P:translation"/>
    <property type="evidence" value="ECO:0007669"/>
    <property type="project" value="UniProtKB-UniRule"/>
</dbReference>
<dbReference type="FunFam" id="1.20.58.110:FF:000001">
    <property type="entry name" value="30S ribosomal protein S20"/>
    <property type="match status" value="1"/>
</dbReference>
<dbReference type="Gene3D" id="1.20.58.110">
    <property type="entry name" value="Ribosomal protein S20"/>
    <property type="match status" value="1"/>
</dbReference>
<dbReference type="HAMAP" id="MF_00500">
    <property type="entry name" value="Ribosomal_bS20"/>
    <property type="match status" value="1"/>
</dbReference>
<dbReference type="InterPro" id="IPR002583">
    <property type="entry name" value="Ribosomal_bS20"/>
</dbReference>
<dbReference type="InterPro" id="IPR036510">
    <property type="entry name" value="Ribosomal_bS20_sf"/>
</dbReference>
<dbReference type="NCBIfam" id="TIGR00029">
    <property type="entry name" value="S20"/>
    <property type="match status" value="1"/>
</dbReference>
<dbReference type="PANTHER" id="PTHR33398">
    <property type="entry name" value="30S RIBOSOMAL PROTEIN S20"/>
    <property type="match status" value="1"/>
</dbReference>
<dbReference type="PANTHER" id="PTHR33398:SF1">
    <property type="entry name" value="SMALL RIBOSOMAL SUBUNIT PROTEIN BS20C"/>
    <property type="match status" value="1"/>
</dbReference>
<dbReference type="Pfam" id="PF01649">
    <property type="entry name" value="Ribosomal_S20p"/>
    <property type="match status" value="1"/>
</dbReference>
<dbReference type="SUPFAM" id="SSF46992">
    <property type="entry name" value="Ribosomal protein S20"/>
    <property type="match status" value="1"/>
</dbReference>
<accession>Q83SR1</accession>